<reference key="1">
    <citation type="submission" date="2008-05" db="EMBL/GenBank/DDBJ databases">
        <title>Genome sequence of Clostridium botulinum Ba4 strain 657.</title>
        <authorList>
            <person name="Shrivastava S."/>
            <person name="Brown J.L."/>
            <person name="Bruce D."/>
            <person name="Detter C."/>
            <person name="Munk C."/>
            <person name="Smith L.A."/>
            <person name="Smith T.J."/>
            <person name="Sutton G."/>
            <person name="Brettin T.S."/>
        </authorList>
    </citation>
    <scope>NUCLEOTIDE SEQUENCE [LARGE SCALE GENOMIC DNA]</scope>
    <source>
        <strain>657 / Type Ba4</strain>
    </source>
</reference>
<protein>
    <recommendedName>
        <fullName evidence="1">Aspartate 1-decarboxylase</fullName>
        <ecNumber evidence="1">4.1.1.11</ecNumber>
    </recommendedName>
    <alternativeName>
        <fullName evidence="1">Aspartate alpha-decarboxylase</fullName>
    </alternativeName>
    <component>
        <recommendedName>
            <fullName evidence="1">Aspartate 1-decarboxylase beta chain</fullName>
        </recommendedName>
    </component>
    <component>
        <recommendedName>
            <fullName evidence="1">Aspartate 1-decarboxylase alpha chain</fullName>
        </recommendedName>
    </component>
</protein>
<gene>
    <name evidence="1" type="primary">panD</name>
    <name type="ordered locus">CLJ_B0492</name>
</gene>
<keyword id="KW-0068">Autocatalytic cleavage</keyword>
<keyword id="KW-0963">Cytoplasm</keyword>
<keyword id="KW-0210">Decarboxylase</keyword>
<keyword id="KW-0456">Lyase</keyword>
<keyword id="KW-0566">Pantothenate biosynthesis</keyword>
<keyword id="KW-0670">Pyruvate</keyword>
<keyword id="KW-0704">Schiff base</keyword>
<keyword id="KW-0865">Zymogen</keyword>
<evidence type="ECO:0000255" key="1">
    <source>
        <dbReference type="HAMAP-Rule" id="MF_00446"/>
    </source>
</evidence>
<dbReference type="EC" id="4.1.1.11" evidence="1"/>
<dbReference type="EMBL" id="CP001083">
    <property type="protein sequence ID" value="ACQ54814.1"/>
    <property type="molecule type" value="Genomic_DNA"/>
</dbReference>
<dbReference type="RefSeq" id="WP_003359635.1">
    <property type="nucleotide sequence ID" value="NC_012658.1"/>
</dbReference>
<dbReference type="SMR" id="C3L033"/>
<dbReference type="KEGG" id="cbi:CLJ_B0492"/>
<dbReference type="HOGENOM" id="CLU_115305_2_0_9"/>
<dbReference type="UniPathway" id="UPA00028">
    <property type="reaction ID" value="UER00002"/>
</dbReference>
<dbReference type="Proteomes" id="UP000002333">
    <property type="component" value="Chromosome"/>
</dbReference>
<dbReference type="GO" id="GO:0005829">
    <property type="term" value="C:cytosol"/>
    <property type="evidence" value="ECO:0007669"/>
    <property type="project" value="TreeGrafter"/>
</dbReference>
<dbReference type="GO" id="GO:0004068">
    <property type="term" value="F:aspartate 1-decarboxylase activity"/>
    <property type="evidence" value="ECO:0007669"/>
    <property type="project" value="UniProtKB-UniRule"/>
</dbReference>
<dbReference type="GO" id="GO:0006523">
    <property type="term" value="P:alanine biosynthetic process"/>
    <property type="evidence" value="ECO:0007669"/>
    <property type="project" value="InterPro"/>
</dbReference>
<dbReference type="GO" id="GO:0015940">
    <property type="term" value="P:pantothenate biosynthetic process"/>
    <property type="evidence" value="ECO:0007669"/>
    <property type="project" value="UniProtKB-UniRule"/>
</dbReference>
<dbReference type="CDD" id="cd06919">
    <property type="entry name" value="Asp_decarbox"/>
    <property type="match status" value="1"/>
</dbReference>
<dbReference type="Gene3D" id="2.40.40.20">
    <property type="match status" value="1"/>
</dbReference>
<dbReference type="HAMAP" id="MF_00446">
    <property type="entry name" value="PanD"/>
    <property type="match status" value="1"/>
</dbReference>
<dbReference type="InterPro" id="IPR009010">
    <property type="entry name" value="Asp_de-COase-like_dom_sf"/>
</dbReference>
<dbReference type="InterPro" id="IPR003190">
    <property type="entry name" value="Asp_decarbox"/>
</dbReference>
<dbReference type="NCBIfam" id="TIGR00223">
    <property type="entry name" value="panD"/>
    <property type="match status" value="1"/>
</dbReference>
<dbReference type="PANTHER" id="PTHR21012">
    <property type="entry name" value="ASPARTATE 1-DECARBOXYLASE"/>
    <property type="match status" value="1"/>
</dbReference>
<dbReference type="PANTHER" id="PTHR21012:SF0">
    <property type="entry name" value="ASPARTATE 1-DECARBOXYLASE"/>
    <property type="match status" value="1"/>
</dbReference>
<dbReference type="Pfam" id="PF02261">
    <property type="entry name" value="Asp_decarbox"/>
    <property type="match status" value="1"/>
</dbReference>
<dbReference type="PIRSF" id="PIRSF006246">
    <property type="entry name" value="Asp_decarbox"/>
    <property type="match status" value="1"/>
</dbReference>
<dbReference type="SUPFAM" id="SSF50692">
    <property type="entry name" value="ADC-like"/>
    <property type="match status" value="1"/>
</dbReference>
<accession>C3L033</accession>
<sequence>MTITMLKSKIHRATVTEANLNYVGSITIDKNLMDKANILEYEKVQIVDIDNGNRFETYVIAGEKHSGVICLNGAAARMVQKGDKIIIMSYCDLTIDEANKFNPTVLFVDNKNNIEKLTNYEKHGEII</sequence>
<comment type="function">
    <text evidence="1">Catalyzes the pyruvoyl-dependent decarboxylation of aspartate to produce beta-alanine.</text>
</comment>
<comment type="catalytic activity">
    <reaction evidence="1">
        <text>L-aspartate + H(+) = beta-alanine + CO2</text>
        <dbReference type="Rhea" id="RHEA:19497"/>
        <dbReference type="ChEBI" id="CHEBI:15378"/>
        <dbReference type="ChEBI" id="CHEBI:16526"/>
        <dbReference type="ChEBI" id="CHEBI:29991"/>
        <dbReference type="ChEBI" id="CHEBI:57966"/>
        <dbReference type="EC" id="4.1.1.11"/>
    </reaction>
</comment>
<comment type="cofactor">
    <cofactor evidence="1">
        <name>pyruvate</name>
        <dbReference type="ChEBI" id="CHEBI:15361"/>
    </cofactor>
    <text evidence="1">Binds 1 pyruvoyl group covalently per subunit.</text>
</comment>
<comment type="pathway">
    <text evidence="1">Cofactor biosynthesis; (R)-pantothenate biosynthesis; beta-alanine from L-aspartate: step 1/1.</text>
</comment>
<comment type="subunit">
    <text evidence="1">Heterooctamer of four alpha and four beta subunits.</text>
</comment>
<comment type="subcellular location">
    <subcellularLocation>
        <location evidence="1">Cytoplasm</location>
    </subcellularLocation>
</comment>
<comment type="PTM">
    <text evidence="1">Is synthesized initially as an inactive proenzyme, which is activated by self-cleavage at a specific serine bond to produce a beta-subunit with a hydroxyl group at its C-terminus and an alpha-subunit with a pyruvoyl group at its N-terminus.</text>
</comment>
<comment type="similarity">
    <text evidence="1">Belongs to the PanD family.</text>
</comment>
<feature type="chain" id="PRO_1000206168" description="Aspartate 1-decarboxylase beta chain" evidence="1">
    <location>
        <begin position="1"/>
        <end position="24"/>
    </location>
</feature>
<feature type="chain" id="PRO_1000206169" description="Aspartate 1-decarboxylase alpha chain" evidence="1">
    <location>
        <begin position="25"/>
        <end position="127"/>
    </location>
</feature>
<feature type="active site" description="Schiff-base intermediate with substrate; via pyruvic acid" evidence="1">
    <location>
        <position position="25"/>
    </location>
</feature>
<feature type="active site" description="Proton donor" evidence="1">
    <location>
        <position position="58"/>
    </location>
</feature>
<feature type="binding site" evidence="1">
    <location>
        <position position="57"/>
    </location>
    <ligand>
        <name>substrate</name>
    </ligand>
</feature>
<feature type="binding site" evidence="1">
    <location>
        <begin position="73"/>
        <end position="75"/>
    </location>
    <ligand>
        <name>substrate</name>
    </ligand>
</feature>
<feature type="modified residue" description="Pyruvic acid (Ser)" evidence="1">
    <location>
        <position position="25"/>
    </location>
</feature>
<name>PAND_CLOB6</name>
<proteinExistence type="inferred from homology"/>
<organism>
    <name type="scientific">Clostridium botulinum (strain 657 / Type Ba4)</name>
    <dbReference type="NCBI Taxonomy" id="515621"/>
    <lineage>
        <taxon>Bacteria</taxon>
        <taxon>Bacillati</taxon>
        <taxon>Bacillota</taxon>
        <taxon>Clostridia</taxon>
        <taxon>Eubacteriales</taxon>
        <taxon>Clostridiaceae</taxon>
        <taxon>Clostridium</taxon>
    </lineage>
</organism>